<keyword id="KW-0560">Oxidoreductase</keyword>
<reference key="1">
    <citation type="submission" date="2008-01" db="EMBL/GenBank/DDBJ databases">
        <title>Complete sequence of Pseudomonas putida GB-1.</title>
        <authorList>
            <consortium name="US DOE Joint Genome Institute"/>
            <person name="Copeland A."/>
            <person name="Lucas S."/>
            <person name="Lapidus A."/>
            <person name="Barry K."/>
            <person name="Glavina del Rio T."/>
            <person name="Dalin E."/>
            <person name="Tice H."/>
            <person name="Pitluck S."/>
            <person name="Bruce D."/>
            <person name="Goodwin L."/>
            <person name="Chertkov O."/>
            <person name="Brettin T."/>
            <person name="Detter J.C."/>
            <person name="Han C."/>
            <person name="Kuske C.R."/>
            <person name="Schmutz J."/>
            <person name="Larimer F."/>
            <person name="Land M."/>
            <person name="Hauser L."/>
            <person name="Kyrpides N."/>
            <person name="Kim E."/>
            <person name="McCarthy J.K."/>
            <person name="Richardson P."/>
        </authorList>
    </citation>
    <scope>NUCLEOTIDE SEQUENCE [LARGE SCALE GENOMIC DNA]</scope>
    <source>
        <strain>GB-1</strain>
    </source>
</reference>
<feature type="chain" id="PRO_1000087357" description="Peptide methionine sulfoxide reductase MsrA">
    <location>
        <begin position="1"/>
        <end position="222"/>
    </location>
</feature>
<feature type="active site" evidence="1">
    <location>
        <position position="60"/>
    </location>
</feature>
<name>MSRA_PSEPG</name>
<sequence length="222" mass="24522">MVLRSEILVNKNVMPTAEQALPGRETPMSLPEFHYVFEGTPLLGPFFEGAIDFAIFGLGCFWGAERRFWQREGVVSTVVGYAGGFTPHPTYEEVCSGLTGHTEVVLVVFDKDKVSYRELLAMFWELHNPTQGMRQGNDVGTQYRSAIYCTSPEQLEQAEASRDAFQAELSKAGFGEITTEIDQAPTVYFAEAYHQQYLAKNPQGYCGIGGTGVCLPPSLQGN</sequence>
<proteinExistence type="inferred from homology"/>
<accession>B0KJ25</accession>
<organism>
    <name type="scientific">Pseudomonas putida (strain GB-1)</name>
    <dbReference type="NCBI Taxonomy" id="76869"/>
    <lineage>
        <taxon>Bacteria</taxon>
        <taxon>Pseudomonadati</taxon>
        <taxon>Pseudomonadota</taxon>
        <taxon>Gammaproteobacteria</taxon>
        <taxon>Pseudomonadales</taxon>
        <taxon>Pseudomonadaceae</taxon>
        <taxon>Pseudomonas</taxon>
    </lineage>
</organism>
<comment type="function">
    <text evidence="1">Has an important function as a repair enzyme for proteins that have been inactivated by oxidation. Catalyzes the reversible oxidation-reduction of methionine sulfoxide in proteins to methionine.</text>
</comment>
<comment type="catalytic activity">
    <reaction evidence="1">
        <text>L-methionyl-[protein] + [thioredoxin]-disulfide + H2O = L-methionyl-(S)-S-oxide-[protein] + [thioredoxin]-dithiol</text>
        <dbReference type="Rhea" id="RHEA:14217"/>
        <dbReference type="Rhea" id="RHEA-COMP:10698"/>
        <dbReference type="Rhea" id="RHEA-COMP:10700"/>
        <dbReference type="Rhea" id="RHEA-COMP:12313"/>
        <dbReference type="Rhea" id="RHEA-COMP:12315"/>
        <dbReference type="ChEBI" id="CHEBI:15377"/>
        <dbReference type="ChEBI" id="CHEBI:16044"/>
        <dbReference type="ChEBI" id="CHEBI:29950"/>
        <dbReference type="ChEBI" id="CHEBI:44120"/>
        <dbReference type="ChEBI" id="CHEBI:50058"/>
        <dbReference type="EC" id="1.8.4.11"/>
    </reaction>
</comment>
<comment type="catalytic activity">
    <reaction evidence="1">
        <text>[thioredoxin]-disulfide + L-methionine + H2O = L-methionine (S)-S-oxide + [thioredoxin]-dithiol</text>
        <dbReference type="Rhea" id="RHEA:19993"/>
        <dbReference type="Rhea" id="RHEA-COMP:10698"/>
        <dbReference type="Rhea" id="RHEA-COMP:10700"/>
        <dbReference type="ChEBI" id="CHEBI:15377"/>
        <dbReference type="ChEBI" id="CHEBI:29950"/>
        <dbReference type="ChEBI" id="CHEBI:50058"/>
        <dbReference type="ChEBI" id="CHEBI:57844"/>
        <dbReference type="ChEBI" id="CHEBI:58772"/>
        <dbReference type="EC" id="1.8.4.11"/>
    </reaction>
</comment>
<comment type="similarity">
    <text evidence="1">Belongs to the MsrA Met sulfoxide reductase family.</text>
</comment>
<dbReference type="EC" id="1.8.4.11" evidence="1"/>
<dbReference type="EMBL" id="CP000926">
    <property type="protein sequence ID" value="ABY96275.1"/>
    <property type="molecule type" value="Genomic_DNA"/>
</dbReference>
<dbReference type="RefSeq" id="WP_012270134.1">
    <property type="nucleotide sequence ID" value="NC_010322.1"/>
</dbReference>
<dbReference type="SMR" id="B0KJ25"/>
<dbReference type="KEGG" id="ppg:PputGB1_0364"/>
<dbReference type="eggNOG" id="COG0225">
    <property type="taxonomic scope" value="Bacteria"/>
</dbReference>
<dbReference type="HOGENOM" id="CLU_031040_10_3_6"/>
<dbReference type="Proteomes" id="UP000002157">
    <property type="component" value="Chromosome"/>
</dbReference>
<dbReference type="GO" id="GO:0005737">
    <property type="term" value="C:cytoplasm"/>
    <property type="evidence" value="ECO:0007669"/>
    <property type="project" value="TreeGrafter"/>
</dbReference>
<dbReference type="GO" id="GO:0036456">
    <property type="term" value="F:L-methionine-(S)-S-oxide reductase activity"/>
    <property type="evidence" value="ECO:0007669"/>
    <property type="project" value="TreeGrafter"/>
</dbReference>
<dbReference type="GO" id="GO:0008113">
    <property type="term" value="F:peptide-methionine (S)-S-oxide reductase activity"/>
    <property type="evidence" value="ECO:0007669"/>
    <property type="project" value="UniProtKB-UniRule"/>
</dbReference>
<dbReference type="GO" id="GO:0034599">
    <property type="term" value="P:cellular response to oxidative stress"/>
    <property type="evidence" value="ECO:0007669"/>
    <property type="project" value="TreeGrafter"/>
</dbReference>
<dbReference type="GO" id="GO:0036211">
    <property type="term" value="P:protein modification process"/>
    <property type="evidence" value="ECO:0007669"/>
    <property type="project" value="UniProtKB-UniRule"/>
</dbReference>
<dbReference type="FunFam" id="3.30.1060.10:FF:000001">
    <property type="entry name" value="Peptide methionine sulfoxide reductase MsrA"/>
    <property type="match status" value="1"/>
</dbReference>
<dbReference type="Gene3D" id="3.30.1060.10">
    <property type="entry name" value="Peptide methionine sulphoxide reductase MsrA"/>
    <property type="match status" value="1"/>
</dbReference>
<dbReference type="HAMAP" id="MF_01401">
    <property type="entry name" value="MsrA"/>
    <property type="match status" value="1"/>
</dbReference>
<dbReference type="InterPro" id="IPR002569">
    <property type="entry name" value="Met_Sox_Rdtase_MsrA_dom"/>
</dbReference>
<dbReference type="InterPro" id="IPR036509">
    <property type="entry name" value="Met_Sox_Rdtase_MsrA_sf"/>
</dbReference>
<dbReference type="InterPro" id="IPR050162">
    <property type="entry name" value="MsrA_MetSO_reductase"/>
</dbReference>
<dbReference type="NCBIfam" id="TIGR00401">
    <property type="entry name" value="msrA"/>
    <property type="match status" value="1"/>
</dbReference>
<dbReference type="PANTHER" id="PTHR42799">
    <property type="entry name" value="MITOCHONDRIAL PEPTIDE METHIONINE SULFOXIDE REDUCTASE"/>
    <property type="match status" value="1"/>
</dbReference>
<dbReference type="PANTHER" id="PTHR42799:SF2">
    <property type="entry name" value="MITOCHONDRIAL PEPTIDE METHIONINE SULFOXIDE REDUCTASE"/>
    <property type="match status" value="1"/>
</dbReference>
<dbReference type="Pfam" id="PF01625">
    <property type="entry name" value="PMSR"/>
    <property type="match status" value="1"/>
</dbReference>
<dbReference type="SUPFAM" id="SSF55068">
    <property type="entry name" value="Peptide methionine sulfoxide reductase"/>
    <property type="match status" value="1"/>
</dbReference>
<evidence type="ECO:0000255" key="1">
    <source>
        <dbReference type="HAMAP-Rule" id="MF_01401"/>
    </source>
</evidence>
<protein>
    <recommendedName>
        <fullName evidence="1">Peptide methionine sulfoxide reductase MsrA</fullName>
        <shortName evidence="1">Protein-methionine-S-oxide reductase</shortName>
        <ecNumber evidence="1">1.8.4.11</ecNumber>
    </recommendedName>
    <alternativeName>
        <fullName evidence="1">Peptide-methionine (S)-S-oxide reductase</fullName>
        <shortName evidence="1">Peptide Met(O) reductase</shortName>
    </alternativeName>
</protein>
<gene>
    <name evidence="1" type="primary">msrA</name>
    <name type="ordered locus">PputGB1_0364</name>
</gene>